<protein>
    <recommendedName>
        <fullName evidence="1">UDP-N-acetylglucosamine 1-carboxyvinyltransferase</fullName>
        <ecNumber evidence="1">2.5.1.7</ecNumber>
    </recommendedName>
    <alternativeName>
        <fullName evidence="1">Enoylpyruvate transferase</fullName>
    </alternativeName>
    <alternativeName>
        <fullName evidence="1">UDP-N-acetylglucosamine enolpyruvyl transferase</fullName>
        <shortName evidence="1">EPT</shortName>
    </alternativeName>
</protein>
<name>MURA_YERPB</name>
<evidence type="ECO:0000255" key="1">
    <source>
        <dbReference type="HAMAP-Rule" id="MF_00111"/>
    </source>
</evidence>
<gene>
    <name evidence="1" type="primary">murA</name>
    <name type="ordered locus">YPTS_3699</name>
</gene>
<dbReference type="EC" id="2.5.1.7" evidence="1"/>
<dbReference type="EMBL" id="CP001048">
    <property type="protein sequence ID" value="ACC90652.1"/>
    <property type="molecule type" value="Genomic_DNA"/>
</dbReference>
<dbReference type="RefSeq" id="WP_002210127.1">
    <property type="nucleotide sequence ID" value="NZ_CP009780.1"/>
</dbReference>
<dbReference type="SMR" id="B2K403"/>
<dbReference type="GeneID" id="57975146"/>
<dbReference type="KEGG" id="ypb:YPTS_3699"/>
<dbReference type="PATRIC" id="fig|502801.10.peg.3156"/>
<dbReference type="UniPathway" id="UPA00219"/>
<dbReference type="GO" id="GO:0005737">
    <property type="term" value="C:cytoplasm"/>
    <property type="evidence" value="ECO:0007669"/>
    <property type="project" value="UniProtKB-SubCell"/>
</dbReference>
<dbReference type="GO" id="GO:0008760">
    <property type="term" value="F:UDP-N-acetylglucosamine 1-carboxyvinyltransferase activity"/>
    <property type="evidence" value="ECO:0007669"/>
    <property type="project" value="UniProtKB-UniRule"/>
</dbReference>
<dbReference type="GO" id="GO:0051301">
    <property type="term" value="P:cell division"/>
    <property type="evidence" value="ECO:0007669"/>
    <property type="project" value="UniProtKB-KW"/>
</dbReference>
<dbReference type="GO" id="GO:0071555">
    <property type="term" value="P:cell wall organization"/>
    <property type="evidence" value="ECO:0007669"/>
    <property type="project" value="UniProtKB-KW"/>
</dbReference>
<dbReference type="GO" id="GO:0009252">
    <property type="term" value="P:peptidoglycan biosynthetic process"/>
    <property type="evidence" value="ECO:0007669"/>
    <property type="project" value="UniProtKB-UniRule"/>
</dbReference>
<dbReference type="GO" id="GO:0008360">
    <property type="term" value="P:regulation of cell shape"/>
    <property type="evidence" value="ECO:0007669"/>
    <property type="project" value="UniProtKB-KW"/>
</dbReference>
<dbReference type="GO" id="GO:0019277">
    <property type="term" value="P:UDP-N-acetylgalactosamine biosynthetic process"/>
    <property type="evidence" value="ECO:0007669"/>
    <property type="project" value="InterPro"/>
</dbReference>
<dbReference type="CDD" id="cd01555">
    <property type="entry name" value="UdpNAET"/>
    <property type="match status" value="1"/>
</dbReference>
<dbReference type="FunFam" id="3.65.10.10:FF:000002">
    <property type="entry name" value="UDP-N-acetylglucosamine 1-carboxyvinyltransferase"/>
    <property type="match status" value="1"/>
</dbReference>
<dbReference type="Gene3D" id="3.65.10.10">
    <property type="entry name" value="Enolpyruvate transferase domain"/>
    <property type="match status" value="2"/>
</dbReference>
<dbReference type="HAMAP" id="MF_00111">
    <property type="entry name" value="MurA"/>
    <property type="match status" value="1"/>
</dbReference>
<dbReference type="InterPro" id="IPR001986">
    <property type="entry name" value="Enolpyruvate_Tfrase_dom"/>
</dbReference>
<dbReference type="InterPro" id="IPR036968">
    <property type="entry name" value="Enolpyruvate_Tfrase_sf"/>
</dbReference>
<dbReference type="InterPro" id="IPR050068">
    <property type="entry name" value="MurA_subfamily"/>
</dbReference>
<dbReference type="InterPro" id="IPR013792">
    <property type="entry name" value="RNA3'P_cycl/enolpyr_Trfase_a/b"/>
</dbReference>
<dbReference type="InterPro" id="IPR005750">
    <property type="entry name" value="UDP_GlcNAc_COvinyl_MurA"/>
</dbReference>
<dbReference type="NCBIfam" id="TIGR01072">
    <property type="entry name" value="murA"/>
    <property type="match status" value="1"/>
</dbReference>
<dbReference type="NCBIfam" id="NF006873">
    <property type="entry name" value="PRK09369.1"/>
    <property type="match status" value="1"/>
</dbReference>
<dbReference type="PANTHER" id="PTHR43783">
    <property type="entry name" value="UDP-N-ACETYLGLUCOSAMINE 1-CARBOXYVINYLTRANSFERASE"/>
    <property type="match status" value="1"/>
</dbReference>
<dbReference type="PANTHER" id="PTHR43783:SF1">
    <property type="entry name" value="UDP-N-ACETYLGLUCOSAMINE 1-CARBOXYVINYLTRANSFERASE"/>
    <property type="match status" value="1"/>
</dbReference>
<dbReference type="Pfam" id="PF00275">
    <property type="entry name" value="EPSP_synthase"/>
    <property type="match status" value="1"/>
</dbReference>
<dbReference type="SUPFAM" id="SSF55205">
    <property type="entry name" value="EPT/RTPC-like"/>
    <property type="match status" value="1"/>
</dbReference>
<accession>B2K403</accession>
<proteinExistence type="inferred from homology"/>
<sequence length="420" mass="44845">MDKFRVQGRTRLSGEVTISGAKNAALPILFAALLAEEPVELQNVPKLKDIDTTIKLLSQLGTKIERNNGSVFVDASAVNEFCAPYDLVKTMRASIWALGPLVARFGQGQVSLPGGCAIGARPVDLHITGLEQLGAEIKLEEGYVKASVNGRLKGAHIVMDKVSVGATVTIMSAATLAEGTTVIENAAREPEIVDTANFLNTLGAKISGAGTDRITIEGVTRLGGGVYRVLPDRIETGTFLVAAAISGGKVVCRQTRPDTLDAVLAKLREAGADIEVGDDWISLDMQGKRPKAITFRTAPHPGFPTDMQAQFSLLNLVAEGTGVITETIFENRFMHVPELIRMGAHAEIESNTVICYGVEQLSGAQVMATDLRASASLVLAGCIAEGVTIVDRIYHIDRGYERIEDKLRALGAKIERVKGE</sequence>
<organism>
    <name type="scientific">Yersinia pseudotuberculosis serotype IB (strain PB1/+)</name>
    <dbReference type="NCBI Taxonomy" id="502801"/>
    <lineage>
        <taxon>Bacteria</taxon>
        <taxon>Pseudomonadati</taxon>
        <taxon>Pseudomonadota</taxon>
        <taxon>Gammaproteobacteria</taxon>
        <taxon>Enterobacterales</taxon>
        <taxon>Yersiniaceae</taxon>
        <taxon>Yersinia</taxon>
    </lineage>
</organism>
<comment type="function">
    <text evidence="1">Cell wall formation. Adds enolpyruvyl to UDP-N-acetylglucosamine.</text>
</comment>
<comment type="catalytic activity">
    <reaction evidence="1">
        <text>phosphoenolpyruvate + UDP-N-acetyl-alpha-D-glucosamine = UDP-N-acetyl-3-O-(1-carboxyvinyl)-alpha-D-glucosamine + phosphate</text>
        <dbReference type="Rhea" id="RHEA:18681"/>
        <dbReference type="ChEBI" id="CHEBI:43474"/>
        <dbReference type="ChEBI" id="CHEBI:57705"/>
        <dbReference type="ChEBI" id="CHEBI:58702"/>
        <dbReference type="ChEBI" id="CHEBI:68483"/>
        <dbReference type="EC" id="2.5.1.7"/>
    </reaction>
</comment>
<comment type="pathway">
    <text evidence="1">Cell wall biogenesis; peptidoglycan biosynthesis.</text>
</comment>
<comment type="subcellular location">
    <subcellularLocation>
        <location evidence="1">Cytoplasm</location>
    </subcellularLocation>
</comment>
<comment type="similarity">
    <text evidence="1">Belongs to the EPSP synthase family. MurA subfamily.</text>
</comment>
<feature type="chain" id="PRO_1000094738" description="UDP-N-acetylglucosamine 1-carboxyvinyltransferase">
    <location>
        <begin position="1"/>
        <end position="420"/>
    </location>
</feature>
<feature type="active site" description="Proton donor" evidence="1">
    <location>
        <position position="116"/>
    </location>
</feature>
<feature type="binding site" evidence="1">
    <location>
        <begin position="22"/>
        <end position="23"/>
    </location>
    <ligand>
        <name>phosphoenolpyruvate</name>
        <dbReference type="ChEBI" id="CHEBI:58702"/>
    </ligand>
</feature>
<feature type="binding site" evidence="1">
    <location>
        <position position="92"/>
    </location>
    <ligand>
        <name>UDP-N-acetyl-alpha-D-glucosamine</name>
        <dbReference type="ChEBI" id="CHEBI:57705"/>
    </ligand>
</feature>
<feature type="binding site" evidence="1">
    <location>
        <begin position="121"/>
        <end position="125"/>
    </location>
    <ligand>
        <name>UDP-N-acetyl-alpha-D-glucosamine</name>
        <dbReference type="ChEBI" id="CHEBI:57705"/>
    </ligand>
</feature>
<feature type="binding site" evidence="1">
    <location>
        <begin position="161"/>
        <end position="164"/>
    </location>
    <ligand>
        <name>UDP-N-acetyl-alpha-D-glucosamine</name>
        <dbReference type="ChEBI" id="CHEBI:57705"/>
    </ligand>
</feature>
<feature type="binding site" evidence="1">
    <location>
        <position position="306"/>
    </location>
    <ligand>
        <name>UDP-N-acetyl-alpha-D-glucosamine</name>
        <dbReference type="ChEBI" id="CHEBI:57705"/>
    </ligand>
</feature>
<feature type="binding site" evidence="1">
    <location>
        <position position="328"/>
    </location>
    <ligand>
        <name>UDP-N-acetyl-alpha-D-glucosamine</name>
        <dbReference type="ChEBI" id="CHEBI:57705"/>
    </ligand>
</feature>
<feature type="modified residue" description="2-(S-cysteinyl)pyruvic acid O-phosphothioketal" evidence="1">
    <location>
        <position position="116"/>
    </location>
</feature>
<reference key="1">
    <citation type="submission" date="2008-04" db="EMBL/GenBank/DDBJ databases">
        <title>Complete sequence of Yersinia pseudotuberculosis PB1/+.</title>
        <authorList>
            <person name="Copeland A."/>
            <person name="Lucas S."/>
            <person name="Lapidus A."/>
            <person name="Glavina del Rio T."/>
            <person name="Dalin E."/>
            <person name="Tice H."/>
            <person name="Bruce D."/>
            <person name="Goodwin L."/>
            <person name="Pitluck S."/>
            <person name="Munk A.C."/>
            <person name="Brettin T."/>
            <person name="Detter J.C."/>
            <person name="Han C."/>
            <person name="Tapia R."/>
            <person name="Schmutz J."/>
            <person name="Larimer F."/>
            <person name="Land M."/>
            <person name="Hauser L."/>
            <person name="Challacombe J.F."/>
            <person name="Green L."/>
            <person name="Lindler L.E."/>
            <person name="Nikolich M.P."/>
            <person name="Richardson P."/>
        </authorList>
    </citation>
    <scope>NUCLEOTIDE SEQUENCE [LARGE SCALE GENOMIC DNA]</scope>
    <source>
        <strain>PB1/+</strain>
    </source>
</reference>
<keyword id="KW-0131">Cell cycle</keyword>
<keyword id="KW-0132">Cell division</keyword>
<keyword id="KW-0133">Cell shape</keyword>
<keyword id="KW-0961">Cell wall biogenesis/degradation</keyword>
<keyword id="KW-0963">Cytoplasm</keyword>
<keyword id="KW-0573">Peptidoglycan synthesis</keyword>
<keyword id="KW-0670">Pyruvate</keyword>
<keyword id="KW-0808">Transferase</keyword>